<proteinExistence type="inferred from homology"/>
<name>PYRC_YERPG</name>
<organism>
    <name type="scientific">Yersinia pestis bv. Antiqua (strain Angola)</name>
    <dbReference type="NCBI Taxonomy" id="349746"/>
    <lineage>
        <taxon>Bacteria</taxon>
        <taxon>Pseudomonadati</taxon>
        <taxon>Pseudomonadota</taxon>
        <taxon>Gammaproteobacteria</taxon>
        <taxon>Enterobacterales</taxon>
        <taxon>Yersiniaceae</taxon>
        <taxon>Yersinia</taxon>
    </lineage>
</organism>
<evidence type="ECO:0000255" key="1">
    <source>
        <dbReference type="HAMAP-Rule" id="MF_00219"/>
    </source>
</evidence>
<keyword id="KW-0378">Hydrolase</keyword>
<keyword id="KW-0479">Metal-binding</keyword>
<keyword id="KW-0665">Pyrimidine biosynthesis</keyword>
<keyword id="KW-0862">Zinc</keyword>
<sequence length="348" mass="38542">MTAQPQTLKIRRPDDWHIHLRDDEMLSTVLPYTSEVFARAIVMPNLAQPITTVASAIAYRERILAAVPAGHKFTPLMTCYLTNSLDAKELTTGFEQGVFTAAKLYPANATTNSTHGVSDIPAIYPLFEQMQKIGMPLLIHGEVTDAAVDIFDREARFIDQILEPIRQKFPELKIVFEHITTKDAADYVLAGNRFLGATVTPQHLMFNRNHMLVGGIRPHLFCLPILKRSTHQQALRAAVASGSDRFFLGTDSAPHAKHRKESSCGCAGVFNAPAALPAYASVFEELNALQHLEAFCALNGPRFYGLPVNDDVVELVRTPFLQPEEIPLGNESVIPFLAGQTLNWSVKR</sequence>
<accession>A9R7Y6</accession>
<feature type="chain" id="PRO_1000100068" description="Dihydroorotase">
    <location>
        <begin position="1"/>
        <end position="348"/>
    </location>
</feature>
<feature type="active site" evidence="1">
    <location>
        <position position="251"/>
    </location>
</feature>
<feature type="binding site" evidence="1">
    <location>
        <position position="17"/>
    </location>
    <ligand>
        <name>Zn(2+)</name>
        <dbReference type="ChEBI" id="CHEBI:29105"/>
        <label>1</label>
    </ligand>
</feature>
<feature type="binding site" evidence="1">
    <location>
        <begin position="19"/>
        <end position="21"/>
    </location>
    <ligand>
        <name>substrate</name>
    </ligand>
</feature>
<feature type="binding site" evidence="1">
    <location>
        <position position="19"/>
    </location>
    <ligand>
        <name>Zn(2+)</name>
        <dbReference type="ChEBI" id="CHEBI:29105"/>
        <label>1</label>
    </ligand>
</feature>
<feature type="binding site" evidence="1">
    <location>
        <position position="45"/>
    </location>
    <ligand>
        <name>substrate</name>
    </ligand>
</feature>
<feature type="binding site" description="via carbamate group" evidence="1">
    <location>
        <position position="103"/>
    </location>
    <ligand>
        <name>Zn(2+)</name>
        <dbReference type="ChEBI" id="CHEBI:29105"/>
        <label>1</label>
    </ligand>
</feature>
<feature type="binding site" description="via carbamate group" evidence="1">
    <location>
        <position position="103"/>
    </location>
    <ligand>
        <name>Zn(2+)</name>
        <dbReference type="ChEBI" id="CHEBI:29105"/>
        <label>2</label>
    </ligand>
</feature>
<feature type="binding site" evidence="1">
    <location>
        <position position="140"/>
    </location>
    <ligand>
        <name>substrate</name>
    </ligand>
</feature>
<feature type="binding site" evidence="1">
    <location>
        <position position="140"/>
    </location>
    <ligand>
        <name>Zn(2+)</name>
        <dbReference type="ChEBI" id="CHEBI:29105"/>
        <label>2</label>
    </ligand>
</feature>
<feature type="binding site" evidence="1">
    <location>
        <position position="178"/>
    </location>
    <ligand>
        <name>Zn(2+)</name>
        <dbReference type="ChEBI" id="CHEBI:29105"/>
        <label>2</label>
    </ligand>
</feature>
<feature type="binding site" evidence="1">
    <location>
        <position position="223"/>
    </location>
    <ligand>
        <name>substrate</name>
    </ligand>
</feature>
<feature type="binding site" evidence="1">
    <location>
        <position position="251"/>
    </location>
    <ligand>
        <name>Zn(2+)</name>
        <dbReference type="ChEBI" id="CHEBI:29105"/>
        <label>1</label>
    </ligand>
</feature>
<feature type="binding site" evidence="1">
    <location>
        <position position="255"/>
    </location>
    <ligand>
        <name>substrate</name>
    </ligand>
</feature>
<feature type="binding site" evidence="1">
    <location>
        <position position="267"/>
    </location>
    <ligand>
        <name>substrate</name>
    </ligand>
</feature>
<feature type="modified residue" description="N6-carboxylysine" evidence="1">
    <location>
        <position position="103"/>
    </location>
</feature>
<protein>
    <recommendedName>
        <fullName evidence="1">Dihydroorotase</fullName>
        <shortName evidence="1">DHOase</shortName>
        <ecNumber evidence="1">3.5.2.3</ecNumber>
    </recommendedName>
</protein>
<comment type="function">
    <text evidence="1">Catalyzes the reversible cyclization of carbamoyl aspartate to dihydroorotate.</text>
</comment>
<comment type="catalytic activity">
    <reaction evidence="1">
        <text>(S)-dihydroorotate + H2O = N-carbamoyl-L-aspartate + H(+)</text>
        <dbReference type="Rhea" id="RHEA:24296"/>
        <dbReference type="ChEBI" id="CHEBI:15377"/>
        <dbReference type="ChEBI" id="CHEBI:15378"/>
        <dbReference type="ChEBI" id="CHEBI:30864"/>
        <dbReference type="ChEBI" id="CHEBI:32814"/>
        <dbReference type="EC" id="3.5.2.3"/>
    </reaction>
</comment>
<comment type="cofactor">
    <cofactor evidence="1">
        <name>Zn(2+)</name>
        <dbReference type="ChEBI" id="CHEBI:29105"/>
    </cofactor>
    <text evidence="1">Binds 2 Zn(2+) ions per subunit.</text>
</comment>
<comment type="pathway">
    <text evidence="1">Pyrimidine metabolism; UMP biosynthesis via de novo pathway; (S)-dihydroorotate from bicarbonate: step 3/3.</text>
</comment>
<comment type="subunit">
    <text evidence="1">Homodimer.</text>
</comment>
<comment type="similarity">
    <text evidence="1">Belongs to the metallo-dependent hydrolases superfamily. DHOase family. Class II DHOase subfamily.</text>
</comment>
<dbReference type="EC" id="3.5.2.3" evidence="1"/>
<dbReference type="EMBL" id="CP000901">
    <property type="protein sequence ID" value="ABX88057.1"/>
    <property type="molecule type" value="Genomic_DNA"/>
</dbReference>
<dbReference type="RefSeq" id="WP_002213109.1">
    <property type="nucleotide sequence ID" value="NZ_CP009935.1"/>
</dbReference>
<dbReference type="SMR" id="A9R7Y6"/>
<dbReference type="MEROPS" id="M38.A02"/>
<dbReference type="GeneID" id="57976984"/>
<dbReference type="KEGG" id="ypg:YpAngola_A0402"/>
<dbReference type="PATRIC" id="fig|349746.12.peg.1351"/>
<dbReference type="UniPathway" id="UPA00070">
    <property type="reaction ID" value="UER00117"/>
</dbReference>
<dbReference type="GO" id="GO:0005829">
    <property type="term" value="C:cytosol"/>
    <property type="evidence" value="ECO:0007669"/>
    <property type="project" value="TreeGrafter"/>
</dbReference>
<dbReference type="GO" id="GO:0004151">
    <property type="term" value="F:dihydroorotase activity"/>
    <property type="evidence" value="ECO:0007669"/>
    <property type="project" value="UniProtKB-UniRule"/>
</dbReference>
<dbReference type="GO" id="GO:0008270">
    <property type="term" value="F:zinc ion binding"/>
    <property type="evidence" value="ECO:0007669"/>
    <property type="project" value="UniProtKB-UniRule"/>
</dbReference>
<dbReference type="GO" id="GO:0006207">
    <property type="term" value="P:'de novo' pyrimidine nucleobase biosynthetic process"/>
    <property type="evidence" value="ECO:0007669"/>
    <property type="project" value="TreeGrafter"/>
</dbReference>
<dbReference type="GO" id="GO:0044205">
    <property type="term" value="P:'de novo' UMP biosynthetic process"/>
    <property type="evidence" value="ECO:0007669"/>
    <property type="project" value="UniProtKB-UniRule"/>
</dbReference>
<dbReference type="CDD" id="cd01294">
    <property type="entry name" value="DHOase"/>
    <property type="match status" value="1"/>
</dbReference>
<dbReference type="FunFam" id="3.20.20.140:FF:000006">
    <property type="entry name" value="Dihydroorotase"/>
    <property type="match status" value="1"/>
</dbReference>
<dbReference type="Gene3D" id="3.20.20.140">
    <property type="entry name" value="Metal-dependent hydrolases"/>
    <property type="match status" value="1"/>
</dbReference>
<dbReference type="HAMAP" id="MF_00219">
    <property type="entry name" value="PyrC_classII"/>
    <property type="match status" value="1"/>
</dbReference>
<dbReference type="InterPro" id="IPR006680">
    <property type="entry name" value="Amidohydro-rel"/>
</dbReference>
<dbReference type="InterPro" id="IPR004721">
    <property type="entry name" value="DHOdimr"/>
</dbReference>
<dbReference type="InterPro" id="IPR002195">
    <property type="entry name" value="Dihydroorotase_CS"/>
</dbReference>
<dbReference type="InterPro" id="IPR032466">
    <property type="entry name" value="Metal_Hydrolase"/>
</dbReference>
<dbReference type="NCBIfam" id="TIGR00856">
    <property type="entry name" value="pyrC_dimer"/>
    <property type="match status" value="1"/>
</dbReference>
<dbReference type="PANTHER" id="PTHR43137">
    <property type="entry name" value="DIHYDROOROTASE"/>
    <property type="match status" value="1"/>
</dbReference>
<dbReference type="PANTHER" id="PTHR43137:SF1">
    <property type="entry name" value="DIHYDROOROTASE"/>
    <property type="match status" value="1"/>
</dbReference>
<dbReference type="Pfam" id="PF01979">
    <property type="entry name" value="Amidohydro_1"/>
    <property type="match status" value="1"/>
</dbReference>
<dbReference type="PIRSF" id="PIRSF001237">
    <property type="entry name" value="DHOdimr"/>
    <property type="match status" value="1"/>
</dbReference>
<dbReference type="SUPFAM" id="SSF51556">
    <property type="entry name" value="Metallo-dependent hydrolases"/>
    <property type="match status" value="1"/>
</dbReference>
<dbReference type="PROSITE" id="PS00483">
    <property type="entry name" value="DIHYDROOROTASE_2"/>
    <property type="match status" value="1"/>
</dbReference>
<gene>
    <name evidence="1" type="primary">pyrC</name>
    <name type="ordered locus">YpAngola_A0402</name>
</gene>
<reference key="1">
    <citation type="journal article" date="2010" name="J. Bacteriol.">
        <title>Genome sequence of the deep-rooted Yersinia pestis strain Angola reveals new insights into the evolution and pangenome of the plague bacterium.</title>
        <authorList>
            <person name="Eppinger M."/>
            <person name="Worsham P.L."/>
            <person name="Nikolich M.P."/>
            <person name="Riley D.R."/>
            <person name="Sebastian Y."/>
            <person name="Mou S."/>
            <person name="Achtman M."/>
            <person name="Lindler L.E."/>
            <person name="Ravel J."/>
        </authorList>
    </citation>
    <scope>NUCLEOTIDE SEQUENCE [LARGE SCALE GENOMIC DNA]</scope>
    <source>
        <strain>Angola</strain>
    </source>
</reference>